<feature type="chain" id="PRO_0000100492" description="Phosphoribosylformylglycinamidine synthase subunit PurL">
    <location>
        <begin position="1"/>
        <end position="729"/>
    </location>
</feature>
<feature type="active site" evidence="1">
    <location>
        <position position="54"/>
    </location>
</feature>
<feature type="active site" description="Proton acceptor" evidence="1">
    <location>
        <position position="100"/>
    </location>
</feature>
<feature type="binding site" evidence="1">
    <location>
        <position position="57"/>
    </location>
    <ligand>
        <name>ATP</name>
        <dbReference type="ChEBI" id="CHEBI:30616"/>
    </ligand>
</feature>
<feature type="binding site" evidence="1">
    <location>
        <position position="96"/>
    </location>
    <ligand>
        <name>ATP</name>
        <dbReference type="ChEBI" id="CHEBI:30616"/>
    </ligand>
</feature>
<feature type="binding site" evidence="1">
    <location>
        <position position="98"/>
    </location>
    <ligand>
        <name>Mg(2+)</name>
        <dbReference type="ChEBI" id="CHEBI:18420"/>
        <label>1</label>
    </ligand>
</feature>
<feature type="binding site" evidence="1">
    <location>
        <begin position="99"/>
        <end position="102"/>
    </location>
    <ligand>
        <name>substrate</name>
    </ligand>
</feature>
<feature type="binding site" evidence="1">
    <location>
        <position position="121"/>
    </location>
    <ligand>
        <name>substrate</name>
    </ligand>
</feature>
<feature type="binding site" evidence="1">
    <location>
        <position position="122"/>
    </location>
    <ligand>
        <name>Mg(2+)</name>
        <dbReference type="ChEBI" id="CHEBI:18420"/>
        <label>2</label>
    </ligand>
</feature>
<feature type="binding site" evidence="1">
    <location>
        <position position="245"/>
    </location>
    <ligand>
        <name>substrate</name>
    </ligand>
</feature>
<feature type="binding site" evidence="1">
    <location>
        <position position="273"/>
    </location>
    <ligand>
        <name>Mg(2+)</name>
        <dbReference type="ChEBI" id="CHEBI:18420"/>
        <label>2</label>
    </ligand>
</feature>
<feature type="binding site" evidence="1">
    <location>
        <begin position="317"/>
        <end position="319"/>
    </location>
    <ligand>
        <name>substrate</name>
    </ligand>
</feature>
<feature type="binding site" evidence="1">
    <location>
        <position position="495"/>
    </location>
    <ligand>
        <name>ATP</name>
        <dbReference type="ChEBI" id="CHEBI:30616"/>
    </ligand>
</feature>
<feature type="binding site" evidence="1">
    <location>
        <position position="532"/>
    </location>
    <ligand>
        <name>ATP</name>
        <dbReference type="ChEBI" id="CHEBI:30616"/>
    </ligand>
</feature>
<feature type="binding site" evidence="1">
    <location>
        <position position="533"/>
    </location>
    <ligand>
        <name>Mg(2+)</name>
        <dbReference type="ChEBI" id="CHEBI:18420"/>
        <label>1</label>
    </ligand>
</feature>
<feature type="binding site" evidence="1">
    <location>
        <position position="535"/>
    </location>
    <ligand>
        <name>substrate</name>
    </ligand>
</feature>
<gene>
    <name evidence="1" type="primary">purL</name>
    <name type="ordered locus">SERP0654</name>
</gene>
<organism>
    <name type="scientific">Staphylococcus epidermidis (strain ATCC 35984 / DSM 28319 / BCRC 17069 / CCUG 31568 / BM 3577 / RP62A)</name>
    <dbReference type="NCBI Taxonomy" id="176279"/>
    <lineage>
        <taxon>Bacteria</taxon>
        <taxon>Bacillati</taxon>
        <taxon>Bacillota</taxon>
        <taxon>Bacilli</taxon>
        <taxon>Bacillales</taxon>
        <taxon>Staphylococcaceae</taxon>
        <taxon>Staphylococcus</taxon>
    </lineage>
</organism>
<proteinExistence type="inferred from homology"/>
<sequence length="729" mass="79751">MSKFIEPSNEEIKLEKLYQDMGLSDKEYDKVVEILGREPNFTEVGIFSVMWSEHCSYKHSKPFLKQFPTTGEHVLMGPGEGAGVVDIGDNQAVVFKVESHNHPSAIEPYQGAATGVGGIIRDIVSIGARPINLLNSLRFGELTVKQNQRLLKGVVSGIGGYGNCIGIPTTAGEIEFDERYDGNPLVNAMCVGIIDHDMVQKGTAKGVGNSVIYVGLKTGRDGIHGATFASEELTEESESKRPSVQIGDPFVGKKLMEATLEAITFDELVGIQDMGAAGLTSSSSEMAAKGGSGLHLRLDQVPTREPGISPYEMMLSETQERMLLVVEKGTEQKFLDLFNKHELDSAVIGEVTDTDRFVLTYDDEVYADIPVQPLADEAPVYILEGEEKEYNTSKNDYSNIDVHDTFIKLLQHPTIASKHHLYEQYDQQVGANTIIKPGLQASVVRVEGTQKAIASTIDGEARYVFNQPYEGGKMVVAEAYRNLIAVGATPLAMTDCLNYGSPEKKEIYQQLIDSTKGMSEACKVLQTPVVSGNVSLYNETRGTSIFPTPVVGMVGLIEDVSYLKEFKPKAGDKIYLVGETRDDFGGSQLEKLLYGSVNHEFESIDLSDEVSKGKLIKQAIRNGIASHVQTVGKGGLLVTLAKISAHYDLGMQAQLDVTNAQLFSETQGRYIVVVKEGQTLDIDQAQEIGHLTHQQLFDISNSDVKMKENVSDIKQKWEGAIVQCLTTQD</sequence>
<accession>Q5HQA1</accession>
<name>PURL_STAEQ</name>
<evidence type="ECO:0000255" key="1">
    <source>
        <dbReference type="HAMAP-Rule" id="MF_00420"/>
    </source>
</evidence>
<comment type="function">
    <text evidence="1">Part of the phosphoribosylformylglycinamidine synthase complex involved in the purines biosynthetic pathway. Catalyzes the ATP-dependent conversion of formylglycinamide ribonucleotide (FGAR) and glutamine to yield formylglycinamidine ribonucleotide (FGAM) and glutamate. The FGAM synthase complex is composed of three subunits. PurQ produces an ammonia molecule by converting glutamine to glutamate. PurL transfers the ammonia molecule to FGAR to form FGAM in an ATP-dependent manner. PurS interacts with PurQ and PurL and is thought to assist in the transfer of the ammonia molecule from PurQ to PurL.</text>
</comment>
<comment type="catalytic activity">
    <reaction evidence="1">
        <text>N(2)-formyl-N(1)-(5-phospho-beta-D-ribosyl)glycinamide + L-glutamine + ATP + H2O = 2-formamido-N(1)-(5-O-phospho-beta-D-ribosyl)acetamidine + L-glutamate + ADP + phosphate + H(+)</text>
        <dbReference type="Rhea" id="RHEA:17129"/>
        <dbReference type="ChEBI" id="CHEBI:15377"/>
        <dbReference type="ChEBI" id="CHEBI:15378"/>
        <dbReference type="ChEBI" id="CHEBI:29985"/>
        <dbReference type="ChEBI" id="CHEBI:30616"/>
        <dbReference type="ChEBI" id="CHEBI:43474"/>
        <dbReference type="ChEBI" id="CHEBI:58359"/>
        <dbReference type="ChEBI" id="CHEBI:147286"/>
        <dbReference type="ChEBI" id="CHEBI:147287"/>
        <dbReference type="ChEBI" id="CHEBI:456216"/>
        <dbReference type="EC" id="6.3.5.3"/>
    </reaction>
</comment>
<comment type="pathway">
    <text evidence="1">Purine metabolism; IMP biosynthesis via de novo pathway; 5-amino-1-(5-phospho-D-ribosyl)imidazole from N(2)-formyl-N(1)-(5-phospho-D-ribosyl)glycinamide: step 1/2.</text>
</comment>
<comment type="subunit">
    <text evidence="1">Monomer. Part of the FGAM synthase complex composed of 1 PurL, 1 PurQ and 2 PurS subunits.</text>
</comment>
<comment type="subcellular location">
    <subcellularLocation>
        <location evidence="1">Cytoplasm</location>
    </subcellularLocation>
</comment>
<comment type="similarity">
    <text evidence="1">Belongs to the FGAMS family.</text>
</comment>
<protein>
    <recommendedName>
        <fullName evidence="1">Phosphoribosylformylglycinamidine synthase subunit PurL</fullName>
        <shortName evidence="1">FGAM synthase</shortName>
        <ecNumber evidence="1">6.3.5.3</ecNumber>
    </recommendedName>
    <alternativeName>
        <fullName evidence="1">Formylglycinamide ribonucleotide amidotransferase subunit II</fullName>
        <shortName evidence="1">FGAR amidotransferase II</shortName>
        <shortName evidence="1">FGAR-AT II</shortName>
    </alternativeName>
    <alternativeName>
        <fullName evidence="1">Glutamine amidotransferase PurL</fullName>
    </alternativeName>
    <alternativeName>
        <fullName evidence="1">Phosphoribosylformylglycinamidine synthase subunit II</fullName>
    </alternativeName>
</protein>
<keyword id="KW-0067">ATP-binding</keyword>
<keyword id="KW-0963">Cytoplasm</keyword>
<keyword id="KW-0436">Ligase</keyword>
<keyword id="KW-0460">Magnesium</keyword>
<keyword id="KW-0479">Metal-binding</keyword>
<keyword id="KW-0547">Nucleotide-binding</keyword>
<keyword id="KW-0658">Purine biosynthesis</keyword>
<keyword id="KW-1185">Reference proteome</keyword>
<dbReference type="EC" id="6.3.5.3" evidence="1"/>
<dbReference type="EMBL" id="CP000029">
    <property type="protein sequence ID" value="AAW54000.1"/>
    <property type="molecule type" value="Genomic_DNA"/>
</dbReference>
<dbReference type="RefSeq" id="WP_002486056.1">
    <property type="nucleotide sequence ID" value="NC_002976.3"/>
</dbReference>
<dbReference type="SMR" id="Q5HQA1"/>
<dbReference type="STRING" id="176279.SERP0654"/>
<dbReference type="KEGG" id="ser:SERP0654"/>
<dbReference type="eggNOG" id="COG0046">
    <property type="taxonomic scope" value="Bacteria"/>
</dbReference>
<dbReference type="HOGENOM" id="CLU_003100_0_1_9"/>
<dbReference type="UniPathway" id="UPA00074">
    <property type="reaction ID" value="UER00128"/>
</dbReference>
<dbReference type="Proteomes" id="UP000000531">
    <property type="component" value="Chromosome"/>
</dbReference>
<dbReference type="GO" id="GO:0005737">
    <property type="term" value="C:cytoplasm"/>
    <property type="evidence" value="ECO:0007669"/>
    <property type="project" value="UniProtKB-SubCell"/>
</dbReference>
<dbReference type="GO" id="GO:0005524">
    <property type="term" value="F:ATP binding"/>
    <property type="evidence" value="ECO:0007669"/>
    <property type="project" value="UniProtKB-UniRule"/>
</dbReference>
<dbReference type="GO" id="GO:0000287">
    <property type="term" value="F:magnesium ion binding"/>
    <property type="evidence" value="ECO:0007669"/>
    <property type="project" value="UniProtKB-UniRule"/>
</dbReference>
<dbReference type="GO" id="GO:0004642">
    <property type="term" value="F:phosphoribosylformylglycinamidine synthase activity"/>
    <property type="evidence" value="ECO:0007669"/>
    <property type="project" value="UniProtKB-UniRule"/>
</dbReference>
<dbReference type="GO" id="GO:0006189">
    <property type="term" value="P:'de novo' IMP biosynthetic process"/>
    <property type="evidence" value="ECO:0007669"/>
    <property type="project" value="UniProtKB-UniRule"/>
</dbReference>
<dbReference type="CDD" id="cd02203">
    <property type="entry name" value="PurL_repeat1"/>
    <property type="match status" value="1"/>
</dbReference>
<dbReference type="CDD" id="cd02204">
    <property type="entry name" value="PurL_repeat2"/>
    <property type="match status" value="1"/>
</dbReference>
<dbReference type="FunFam" id="3.30.1330.10:FF:000004">
    <property type="entry name" value="Phosphoribosylformylglycinamidine synthase subunit PurL"/>
    <property type="match status" value="1"/>
</dbReference>
<dbReference type="Gene3D" id="3.90.650.10">
    <property type="entry name" value="PurM-like C-terminal domain"/>
    <property type="match status" value="2"/>
</dbReference>
<dbReference type="Gene3D" id="3.30.1330.10">
    <property type="entry name" value="PurM-like, N-terminal domain"/>
    <property type="match status" value="2"/>
</dbReference>
<dbReference type="HAMAP" id="MF_00420">
    <property type="entry name" value="PurL_2"/>
    <property type="match status" value="1"/>
</dbReference>
<dbReference type="InterPro" id="IPR010074">
    <property type="entry name" value="PRibForGlyAmidine_synth_PurL"/>
</dbReference>
<dbReference type="InterPro" id="IPR041609">
    <property type="entry name" value="PurL_linker"/>
</dbReference>
<dbReference type="InterPro" id="IPR010918">
    <property type="entry name" value="PurM-like_C_dom"/>
</dbReference>
<dbReference type="InterPro" id="IPR036676">
    <property type="entry name" value="PurM-like_C_sf"/>
</dbReference>
<dbReference type="InterPro" id="IPR016188">
    <property type="entry name" value="PurM-like_N"/>
</dbReference>
<dbReference type="InterPro" id="IPR036921">
    <property type="entry name" value="PurM-like_N_sf"/>
</dbReference>
<dbReference type="NCBIfam" id="TIGR01736">
    <property type="entry name" value="FGAM_synth_II"/>
    <property type="match status" value="1"/>
</dbReference>
<dbReference type="NCBIfam" id="NF002290">
    <property type="entry name" value="PRK01213.1"/>
    <property type="match status" value="1"/>
</dbReference>
<dbReference type="PANTHER" id="PTHR43555">
    <property type="entry name" value="PHOSPHORIBOSYLFORMYLGLYCINAMIDINE SYNTHASE SUBUNIT PURL"/>
    <property type="match status" value="1"/>
</dbReference>
<dbReference type="PANTHER" id="PTHR43555:SF1">
    <property type="entry name" value="PHOSPHORIBOSYLFORMYLGLYCINAMIDINE SYNTHASE SUBUNIT PURL"/>
    <property type="match status" value="1"/>
</dbReference>
<dbReference type="Pfam" id="PF00586">
    <property type="entry name" value="AIRS"/>
    <property type="match status" value="2"/>
</dbReference>
<dbReference type="Pfam" id="PF02769">
    <property type="entry name" value="AIRS_C"/>
    <property type="match status" value="2"/>
</dbReference>
<dbReference type="Pfam" id="PF18072">
    <property type="entry name" value="FGAR-AT_linker"/>
    <property type="match status" value="1"/>
</dbReference>
<dbReference type="PIRSF" id="PIRSF001587">
    <property type="entry name" value="FGAM_synthase_II"/>
    <property type="match status" value="1"/>
</dbReference>
<dbReference type="SUPFAM" id="SSF56042">
    <property type="entry name" value="PurM C-terminal domain-like"/>
    <property type="match status" value="2"/>
</dbReference>
<dbReference type="SUPFAM" id="SSF55326">
    <property type="entry name" value="PurM N-terminal domain-like"/>
    <property type="match status" value="2"/>
</dbReference>
<reference key="1">
    <citation type="journal article" date="2005" name="J. Bacteriol.">
        <title>Insights on evolution of virulence and resistance from the complete genome analysis of an early methicillin-resistant Staphylococcus aureus strain and a biofilm-producing methicillin-resistant Staphylococcus epidermidis strain.</title>
        <authorList>
            <person name="Gill S.R."/>
            <person name="Fouts D.E."/>
            <person name="Archer G.L."/>
            <person name="Mongodin E.F."/>
            <person name="DeBoy R.T."/>
            <person name="Ravel J."/>
            <person name="Paulsen I.T."/>
            <person name="Kolonay J.F."/>
            <person name="Brinkac L.M."/>
            <person name="Beanan M.J."/>
            <person name="Dodson R.J."/>
            <person name="Daugherty S.C."/>
            <person name="Madupu R."/>
            <person name="Angiuoli S.V."/>
            <person name="Durkin A.S."/>
            <person name="Haft D.H."/>
            <person name="Vamathevan J.J."/>
            <person name="Khouri H."/>
            <person name="Utterback T.R."/>
            <person name="Lee C."/>
            <person name="Dimitrov G."/>
            <person name="Jiang L."/>
            <person name="Qin H."/>
            <person name="Weidman J."/>
            <person name="Tran K."/>
            <person name="Kang K.H."/>
            <person name="Hance I.R."/>
            <person name="Nelson K.E."/>
            <person name="Fraser C.M."/>
        </authorList>
    </citation>
    <scope>NUCLEOTIDE SEQUENCE [LARGE SCALE GENOMIC DNA]</scope>
    <source>
        <strain>ATCC 35984 / DSM 28319 / BCRC 17069 / CCUG 31568 / BM 3577 / RP62A</strain>
    </source>
</reference>